<proteinExistence type="evidence at transcript level"/>
<name>CF120_MOUSE</name>
<keyword id="KW-0053">Apoptosis</keyword>
<keyword id="KW-0325">Glycoprotein</keyword>
<keyword id="KW-1185">Reference proteome</keyword>
<keyword id="KW-0964">Secreted</keyword>
<keyword id="KW-0732">Signal</keyword>
<protein>
    <recommendedName>
        <fullName>UPF0669 protein C6orf120 homolog</fullName>
    </recommendedName>
</protein>
<organism>
    <name type="scientific">Mus musculus</name>
    <name type="common">Mouse</name>
    <dbReference type="NCBI Taxonomy" id="10090"/>
    <lineage>
        <taxon>Eukaryota</taxon>
        <taxon>Metazoa</taxon>
        <taxon>Chordata</taxon>
        <taxon>Craniata</taxon>
        <taxon>Vertebrata</taxon>
        <taxon>Euteleostomi</taxon>
        <taxon>Mammalia</taxon>
        <taxon>Eutheria</taxon>
        <taxon>Euarchontoglires</taxon>
        <taxon>Glires</taxon>
        <taxon>Rodentia</taxon>
        <taxon>Myomorpha</taxon>
        <taxon>Muroidea</taxon>
        <taxon>Muridae</taxon>
        <taxon>Murinae</taxon>
        <taxon>Mus</taxon>
        <taxon>Mus</taxon>
    </lineage>
</organism>
<feature type="signal peptide" evidence="2">
    <location>
        <begin position="1"/>
        <end position="23"/>
    </location>
</feature>
<feature type="chain" id="PRO_0000297664" description="UPF0669 protein C6orf120 homolog">
    <location>
        <begin position="24"/>
        <end position="185"/>
    </location>
</feature>
<feature type="glycosylation site" description="N-linked (GlcNAc...) asparagine" evidence="2">
    <location>
        <position position="47"/>
    </location>
</feature>
<comment type="function">
    <text evidence="1">May be involved in induction of apoptosis in CD4(+) T-cells, but not CD8(+) T-cells or hepatocytes.</text>
</comment>
<comment type="subcellular location">
    <subcellularLocation>
        <location evidence="1">Secreted</location>
    </subcellularLocation>
    <text evidence="1">Secreted by hepatocytes.</text>
</comment>
<comment type="similarity">
    <text evidence="3">Belongs to the UPF0669 family.</text>
</comment>
<comment type="sequence caution" evidence="3">
    <conflict type="erroneous initiation">
        <sequence resource="EMBL-CDS" id="AAH43303"/>
    </conflict>
    <text>Extended N-terminus.</text>
</comment>
<comment type="sequence caution" evidence="3">
    <conflict type="erroneous initiation">
        <sequence resource="EMBL-CDS" id="AAH43449"/>
    </conflict>
    <text>Extended N-terminus.</text>
</comment>
<comment type="sequence caution" evidence="3">
    <conflict type="erroneous initiation">
        <sequence resource="EMBL-CDS" id="BAB30667"/>
    </conflict>
    <text>Extended N-terminus.</text>
</comment>
<comment type="sequence caution" evidence="3">
    <conflict type="frameshift">
        <sequence resource="EMBL-CDS" id="BAC25722"/>
    </conflict>
</comment>
<reference key="1">
    <citation type="journal article" date="2005" name="Science">
        <title>The transcriptional landscape of the mammalian genome.</title>
        <authorList>
            <person name="Carninci P."/>
            <person name="Kasukawa T."/>
            <person name="Katayama S."/>
            <person name="Gough J."/>
            <person name="Frith M.C."/>
            <person name="Maeda N."/>
            <person name="Oyama R."/>
            <person name="Ravasi T."/>
            <person name="Lenhard B."/>
            <person name="Wells C."/>
            <person name="Kodzius R."/>
            <person name="Shimokawa K."/>
            <person name="Bajic V.B."/>
            <person name="Brenner S.E."/>
            <person name="Batalov S."/>
            <person name="Forrest A.R."/>
            <person name="Zavolan M."/>
            <person name="Davis M.J."/>
            <person name="Wilming L.G."/>
            <person name="Aidinis V."/>
            <person name="Allen J.E."/>
            <person name="Ambesi-Impiombato A."/>
            <person name="Apweiler R."/>
            <person name="Aturaliya R.N."/>
            <person name="Bailey T.L."/>
            <person name="Bansal M."/>
            <person name="Baxter L."/>
            <person name="Beisel K.W."/>
            <person name="Bersano T."/>
            <person name="Bono H."/>
            <person name="Chalk A.M."/>
            <person name="Chiu K.P."/>
            <person name="Choudhary V."/>
            <person name="Christoffels A."/>
            <person name="Clutterbuck D.R."/>
            <person name="Crowe M.L."/>
            <person name="Dalla E."/>
            <person name="Dalrymple B.P."/>
            <person name="de Bono B."/>
            <person name="Della Gatta G."/>
            <person name="di Bernardo D."/>
            <person name="Down T."/>
            <person name="Engstrom P."/>
            <person name="Fagiolini M."/>
            <person name="Faulkner G."/>
            <person name="Fletcher C.F."/>
            <person name="Fukushima T."/>
            <person name="Furuno M."/>
            <person name="Futaki S."/>
            <person name="Gariboldi M."/>
            <person name="Georgii-Hemming P."/>
            <person name="Gingeras T.R."/>
            <person name="Gojobori T."/>
            <person name="Green R.E."/>
            <person name="Gustincich S."/>
            <person name="Harbers M."/>
            <person name="Hayashi Y."/>
            <person name="Hensch T.K."/>
            <person name="Hirokawa N."/>
            <person name="Hill D."/>
            <person name="Huminiecki L."/>
            <person name="Iacono M."/>
            <person name="Ikeo K."/>
            <person name="Iwama A."/>
            <person name="Ishikawa T."/>
            <person name="Jakt M."/>
            <person name="Kanapin A."/>
            <person name="Katoh M."/>
            <person name="Kawasawa Y."/>
            <person name="Kelso J."/>
            <person name="Kitamura H."/>
            <person name="Kitano H."/>
            <person name="Kollias G."/>
            <person name="Krishnan S.P."/>
            <person name="Kruger A."/>
            <person name="Kummerfeld S.K."/>
            <person name="Kurochkin I.V."/>
            <person name="Lareau L.F."/>
            <person name="Lazarevic D."/>
            <person name="Lipovich L."/>
            <person name="Liu J."/>
            <person name="Liuni S."/>
            <person name="McWilliam S."/>
            <person name="Madan Babu M."/>
            <person name="Madera M."/>
            <person name="Marchionni L."/>
            <person name="Matsuda H."/>
            <person name="Matsuzawa S."/>
            <person name="Miki H."/>
            <person name="Mignone F."/>
            <person name="Miyake S."/>
            <person name="Morris K."/>
            <person name="Mottagui-Tabar S."/>
            <person name="Mulder N."/>
            <person name="Nakano N."/>
            <person name="Nakauchi H."/>
            <person name="Ng P."/>
            <person name="Nilsson R."/>
            <person name="Nishiguchi S."/>
            <person name="Nishikawa S."/>
            <person name="Nori F."/>
            <person name="Ohara O."/>
            <person name="Okazaki Y."/>
            <person name="Orlando V."/>
            <person name="Pang K.C."/>
            <person name="Pavan W.J."/>
            <person name="Pavesi G."/>
            <person name="Pesole G."/>
            <person name="Petrovsky N."/>
            <person name="Piazza S."/>
            <person name="Reed J."/>
            <person name="Reid J.F."/>
            <person name="Ring B.Z."/>
            <person name="Ringwald M."/>
            <person name="Rost B."/>
            <person name="Ruan Y."/>
            <person name="Salzberg S.L."/>
            <person name="Sandelin A."/>
            <person name="Schneider C."/>
            <person name="Schoenbach C."/>
            <person name="Sekiguchi K."/>
            <person name="Semple C.A."/>
            <person name="Seno S."/>
            <person name="Sessa L."/>
            <person name="Sheng Y."/>
            <person name="Shibata Y."/>
            <person name="Shimada H."/>
            <person name="Shimada K."/>
            <person name="Silva D."/>
            <person name="Sinclair B."/>
            <person name="Sperling S."/>
            <person name="Stupka E."/>
            <person name="Sugiura K."/>
            <person name="Sultana R."/>
            <person name="Takenaka Y."/>
            <person name="Taki K."/>
            <person name="Tammoja K."/>
            <person name="Tan S.L."/>
            <person name="Tang S."/>
            <person name="Taylor M.S."/>
            <person name="Tegner J."/>
            <person name="Teichmann S.A."/>
            <person name="Ueda H.R."/>
            <person name="van Nimwegen E."/>
            <person name="Verardo R."/>
            <person name="Wei C.L."/>
            <person name="Yagi K."/>
            <person name="Yamanishi H."/>
            <person name="Zabarovsky E."/>
            <person name="Zhu S."/>
            <person name="Zimmer A."/>
            <person name="Hide W."/>
            <person name="Bult C."/>
            <person name="Grimmond S.M."/>
            <person name="Teasdale R.D."/>
            <person name="Liu E.T."/>
            <person name="Brusic V."/>
            <person name="Quackenbush J."/>
            <person name="Wahlestedt C."/>
            <person name="Mattick J.S."/>
            <person name="Hume D.A."/>
            <person name="Kai C."/>
            <person name="Sasaki D."/>
            <person name="Tomaru Y."/>
            <person name="Fukuda S."/>
            <person name="Kanamori-Katayama M."/>
            <person name="Suzuki M."/>
            <person name="Aoki J."/>
            <person name="Arakawa T."/>
            <person name="Iida J."/>
            <person name="Imamura K."/>
            <person name="Itoh M."/>
            <person name="Kato T."/>
            <person name="Kawaji H."/>
            <person name="Kawagashira N."/>
            <person name="Kawashima T."/>
            <person name="Kojima M."/>
            <person name="Kondo S."/>
            <person name="Konno H."/>
            <person name="Nakano K."/>
            <person name="Ninomiya N."/>
            <person name="Nishio T."/>
            <person name="Okada M."/>
            <person name="Plessy C."/>
            <person name="Shibata K."/>
            <person name="Shiraki T."/>
            <person name="Suzuki S."/>
            <person name="Tagami M."/>
            <person name="Waki K."/>
            <person name="Watahiki A."/>
            <person name="Okamura-Oho Y."/>
            <person name="Suzuki H."/>
            <person name="Kawai J."/>
            <person name="Hayashizaki Y."/>
        </authorList>
    </citation>
    <scope>NUCLEOTIDE SEQUENCE [LARGE SCALE MRNA]</scope>
    <source>
        <strain>C57BL/6J</strain>
        <tissue>Bone marrow</tissue>
        <tissue>Cerebellum</tissue>
        <tissue>Head</tissue>
        <tissue>Placenta</tissue>
    </source>
</reference>
<reference key="2">
    <citation type="journal article" date="2004" name="Genome Res.">
        <title>The status, quality, and expansion of the NIH full-length cDNA project: the Mammalian Gene Collection (MGC).</title>
        <authorList>
            <consortium name="The MGC Project Team"/>
        </authorList>
    </citation>
    <scope>NUCLEOTIDE SEQUENCE [LARGE SCALE MRNA]</scope>
    <source>
        <strain>Czech II</strain>
        <tissue>Mammary tumor</tissue>
    </source>
</reference>
<sequence>MATPWRRALLMILASQVVTLVKCLEDDDVPEEWLLLHVVQGQIGAGNYSYLRLNHEGKIILRMQSLRGDADLYVSDSTPHPSFDDYELQSVTCGQDVVSIPAHFQRPVGIGIYGHPSHHESDFEMRVYYDRTVDQYPFGEAAYFTDPTGASQQQAYAPEEAAQEEESVLWTILISILKLVLEILF</sequence>
<accession>Q9DAY5</accession>
<accession>Q80ST2</accession>
<accession>Q8CEI9</accession>
<accession>Q9CU86</accession>
<dbReference type="EMBL" id="AK005427">
    <property type="protein sequence ID" value="BAB24021.1"/>
    <property type="molecule type" value="mRNA"/>
</dbReference>
<dbReference type="EMBL" id="AK017276">
    <property type="protein sequence ID" value="BAB30667.1"/>
    <property type="status" value="ALT_INIT"/>
    <property type="molecule type" value="mRNA"/>
</dbReference>
<dbReference type="EMBL" id="AK028052">
    <property type="protein sequence ID" value="BAC25722.1"/>
    <property type="status" value="ALT_FRAME"/>
    <property type="molecule type" value="mRNA"/>
</dbReference>
<dbReference type="EMBL" id="AK150772">
    <property type="protein sequence ID" value="BAE29838.1"/>
    <property type="molecule type" value="mRNA"/>
</dbReference>
<dbReference type="EMBL" id="AK167490">
    <property type="protein sequence ID" value="BAE39568.1"/>
    <property type="molecule type" value="mRNA"/>
</dbReference>
<dbReference type="EMBL" id="BC043303">
    <property type="protein sequence ID" value="AAH43303.1"/>
    <property type="status" value="ALT_INIT"/>
    <property type="molecule type" value="mRNA"/>
</dbReference>
<dbReference type="EMBL" id="BC043449">
    <property type="protein sequence ID" value="AAH43449.1"/>
    <property type="status" value="ALT_INIT"/>
    <property type="molecule type" value="mRNA"/>
</dbReference>
<dbReference type="CCDS" id="CCDS37444.1"/>
<dbReference type="RefSeq" id="NP_001077349.1">
    <property type="nucleotide sequence ID" value="NM_001083880.1"/>
</dbReference>
<dbReference type="RefSeq" id="NP_001077350.1">
    <property type="nucleotide sequence ID" value="NM_001083881.1"/>
</dbReference>
<dbReference type="RefSeq" id="NP_001077351.1">
    <property type="nucleotide sequence ID" value="NM_001083882.1"/>
</dbReference>
<dbReference type="RefSeq" id="NP_080727.2">
    <property type="nucleotide sequence ID" value="NM_026451.2"/>
</dbReference>
<dbReference type="BioGRID" id="212530">
    <property type="interactions" value="1"/>
</dbReference>
<dbReference type="FunCoup" id="Q9DAY5">
    <property type="interactions" value="1447"/>
</dbReference>
<dbReference type="STRING" id="10090.ENSMUSP00000125970"/>
<dbReference type="GlyGen" id="Q9DAY5">
    <property type="glycosylation" value="1 site, 1 N-linked glycan (1 site)"/>
</dbReference>
<dbReference type="PhosphoSitePlus" id="Q9DAY5"/>
<dbReference type="PaxDb" id="10090-ENSMUSP00000125970"/>
<dbReference type="Pumba" id="Q9DAY5"/>
<dbReference type="Antibodypedia" id="49519">
    <property type="antibodies" value="58 antibodies from 10 providers"/>
</dbReference>
<dbReference type="Ensembl" id="ENSMUST00000052691.9">
    <property type="protein sequence ID" value="ENSMUSP00000093344.5"/>
    <property type="gene ID" value="ENSMUSG00000050088.10"/>
</dbReference>
<dbReference type="Ensembl" id="ENSMUST00000164837.3">
    <property type="protein sequence ID" value="ENSMUSP00000125970.3"/>
    <property type="gene ID" value="ENSMUSG00000050088.10"/>
</dbReference>
<dbReference type="Ensembl" id="ENSMUST00000174004.2">
    <property type="protein sequence ID" value="ENSMUSP00000133628.2"/>
    <property type="gene ID" value="ENSMUSG00000050088.10"/>
</dbReference>
<dbReference type="GeneID" id="67912"/>
<dbReference type="KEGG" id="mmu:67912"/>
<dbReference type="UCSC" id="uc008ang.1">
    <property type="organism name" value="mouse"/>
</dbReference>
<dbReference type="AGR" id="MGI:1915162"/>
<dbReference type="MGI" id="MGI:1915162">
    <property type="gene designation" value="1600012H06Rik"/>
</dbReference>
<dbReference type="VEuPathDB" id="HostDB:ENSMUSG00000050088"/>
<dbReference type="eggNOG" id="ENOG502RXJP">
    <property type="taxonomic scope" value="Eukaryota"/>
</dbReference>
<dbReference type="GeneTree" id="ENSGT00390000018879"/>
<dbReference type="HOGENOM" id="CLU_113576_1_0_1"/>
<dbReference type="InParanoid" id="Q9DAY5"/>
<dbReference type="OMA" id="FGETAYS"/>
<dbReference type="OrthoDB" id="10046613at2759"/>
<dbReference type="PhylomeDB" id="Q9DAY5"/>
<dbReference type="TreeFam" id="TF331743"/>
<dbReference type="Reactome" id="R-MMU-6798695">
    <property type="pathway name" value="Neutrophil degranulation"/>
</dbReference>
<dbReference type="BioGRID-ORCS" id="67912">
    <property type="hits" value="2 hits in 76 CRISPR screens"/>
</dbReference>
<dbReference type="PRO" id="PR:Q9DAY5"/>
<dbReference type="Proteomes" id="UP000000589">
    <property type="component" value="Chromosome 17"/>
</dbReference>
<dbReference type="RNAct" id="Q9DAY5">
    <property type="molecule type" value="protein"/>
</dbReference>
<dbReference type="Bgee" id="ENSMUSG00000050088">
    <property type="expression patterns" value="Expressed in urinary bladder urothelium and 250 other cell types or tissues"/>
</dbReference>
<dbReference type="GO" id="GO:0005576">
    <property type="term" value="C:extracellular region"/>
    <property type="evidence" value="ECO:0007669"/>
    <property type="project" value="UniProtKB-SubCell"/>
</dbReference>
<dbReference type="GO" id="GO:0006915">
    <property type="term" value="P:apoptotic process"/>
    <property type="evidence" value="ECO:0007669"/>
    <property type="project" value="UniProtKB-KW"/>
</dbReference>
<dbReference type="InterPro" id="IPR031420">
    <property type="entry name" value="UPF0669"/>
</dbReference>
<dbReference type="PANTHER" id="PTHR31703">
    <property type="entry name" value="UPF0669 PROTEIN C6ORF120"/>
    <property type="match status" value="1"/>
</dbReference>
<dbReference type="PANTHER" id="PTHR31703:SF2">
    <property type="entry name" value="UPF0669 PROTEIN C6ORF120"/>
    <property type="match status" value="1"/>
</dbReference>
<dbReference type="Pfam" id="PF17065">
    <property type="entry name" value="UPF0669"/>
    <property type="match status" value="1"/>
</dbReference>
<evidence type="ECO:0000250" key="1"/>
<evidence type="ECO:0000255" key="2"/>
<evidence type="ECO:0000305" key="3"/>